<sequence>MDKFLISGSGPLTGELRISGSKNAALPILAATILAQGKVRLANVPHLNDISTMIALLRTLGLTIEIQGDHVVIVDPNTINSYTAPYELVKTMRASILVLGPLLARYGEANVSFPGGCAIGSRPVDIHLRGLEAMGASIEIDGGYIRARRQGRLKGCHFLMDTVTVGGTENLLMAAVLAEGKTILENAAREPEIVDLANLLVAMGARISGIGTSTLTIEGVESLTGCDYSVMPDRIETGTYLVAAAASRGKVRLTHTSASILEAVIVKLQEAGADVTTGEDWIALDMNGRRPKAVSLKTAPYPAFPTDMQSQFMALNAVADGISHITETIFENRLVQVAELKRMGAHIELEHNTAIVTGVERLKAAPVMASDLRASASLVIAGLVADGETLIDRIYHIDRGYEAIEAKFQALGASVRRIKS</sequence>
<dbReference type="EC" id="2.5.1.7" evidence="1"/>
<dbReference type="EMBL" id="CP000934">
    <property type="protein sequence ID" value="ACE86115.1"/>
    <property type="molecule type" value="Genomic_DNA"/>
</dbReference>
<dbReference type="RefSeq" id="WP_012488390.1">
    <property type="nucleotide sequence ID" value="NC_010995.1"/>
</dbReference>
<dbReference type="SMR" id="B3PBY5"/>
<dbReference type="STRING" id="498211.CJA_2796"/>
<dbReference type="KEGG" id="cja:CJA_2796"/>
<dbReference type="eggNOG" id="COG0766">
    <property type="taxonomic scope" value="Bacteria"/>
</dbReference>
<dbReference type="HOGENOM" id="CLU_027387_0_0_6"/>
<dbReference type="OrthoDB" id="9803760at2"/>
<dbReference type="UniPathway" id="UPA00219"/>
<dbReference type="Proteomes" id="UP000001036">
    <property type="component" value="Chromosome"/>
</dbReference>
<dbReference type="GO" id="GO:0005737">
    <property type="term" value="C:cytoplasm"/>
    <property type="evidence" value="ECO:0007669"/>
    <property type="project" value="UniProtKB-SubCell"/>
</dbReference>
<dbReference type="GO" id="GO:0008760">
    <property type="term" value="F:UDP-N-acetylglucosamine 1-carboxyvinyltransferase activity"/>
    <property type="evidence" value="ECO:0007669"/>
    <property type="project" value="UniProtKB-UniRule"/>
</dbReference>
<dbReference type="GO" id="GO:0051301">
    <property type="term" value="P:cell division"/>
    <property type="evidence" value="ECO:0007669"/>
    <property type="project" value="UniProtKB-KW"/>
</dbReference>
<dbReference type="GO" id="GO:0071555">
    <property type="term" value="P:cell wall organization"/>
    <property type="evidence" value="ECO:0007669"/>
    <property type="project" value="UniProtKB-KW"/>
</dbReference>
<dbReference type="GO" id="GO:0009252">
    <property type="term" value="P:peptidoglycan biosynthetic process"/>
    <property type="evidence" value="ECO:0007669"/>
    <property type="project" value="UniProtKB-UniRule"/>
</dbReference>
<dbReference type="GO" id="GO:0008360">
    <property type="term" value="P:regulation of cell shape"/>
    <property type="evidence" value="ECO:0007669"/>
    <property type="project" value="UniProtKB-KW"/>
</dbReference>
<dbReference type="GO" id="GO:0019277">
    <property type="term" value="P:UDP-N-acetylgalactosamine biosynthetic process"/>
    <property type="evidence" value="ECO:0007669"/>
    <property type="project" value="InterPro"/>
</dbReference>
<dbReference type="CDD" id="cd01555">
    <property type="entry name" value="UdpNAET"/>
    <property type="match status" value="1"/>
</dbReference>
<dbReference type="FunFam" id="3.65.10.10:FF:000001">
    <property type="entry name" value="UDP-N-acetylglucosamine 1-carboxyvinyltransferase"/>
    <property type="match status" value="1"/>
</dbReference>
<dbReference type="Gene3D" id="3.65.10.10">
    <property type="entry name" value="Enolpyruvate transferase domain"/>
    <property type="match status" value="2"/>
</dbReference>
<dbReference type="HAMAP" id="MF_00111">
    <property type="entry name" value="MurA"/>
    <property type="match status" value="1"/>
</dbReference>
<dbReference type="InterPro" id="IPR001986">
    <property type="entry name" value="Enolpyruvate_Tfrase_dom"/>
</dbReference>
<dbReference type="InterPro" id="IPR036968">
    <property type="entry name" value="Enolpyruvate_Tfrase_sf"/>
</dbReference>
<dbReference type="InterPro" id="IPR050068">
    <property type="entry name" value="MurA_subfamily"/>
</dbReference>
<dbReference type="InterPro" id="IPR013792">
    <property type="entry name" value="RNA3'P_cycl/enolpyr_Trfase_a/b"/>
</dbReference>
<dbReference type="InterPro" id="IPR005750">
    <property type="entry name" value="UDP_GlcNAc_COvinyl_MurA"/>
</dbReference>
<dbReference type="NCBIfam" id="TIGR01072">
    <property type="entry name" value="murA"/>
    <property type="match status" value="1"/>
</dbReference>
<dbReference type="NCBIfam" id="NF006873">
    <property type="entry name" value="PRK09369.1"/>
    <property type="match status" value="1"/>
</dbReference>
<dbReference type="PANTHER" id="PTHR43783">
    <property type="entry name" value="UDP-N-ACETYLGLUCOSAMINE 1-CARBOXYVINYLTRANSFERASE"/>
    <property type="match status" value="1"/>
</dbReference>
<dbReference type="PANTHER" id="PTHR43783:SF1">
    <property type="entry name" value="UDP-N-ACETYLGLUCOSAMINE 1-CARBOXYVINYLTRANSFERASE"/>
    <property type="match status" value="1"/>
</dbReference>
<dbReference type="Pfam" id="PF00275">
    <property type="entry name" value="EPSP_synthase"/>
    <property type="match status" value="1"/>
</dbReference>
<dbReference type="SUPFAM" id="SSF55205">
    <property type="entry name" value="EPT/RTPC-like"/>
    <property type="match status" value="1"/>
</dbReference>
<protein>
    <recommendedName>
        <fullName evidence="1">UDP-N-acetylglucosamine 1-carboxyvinyltransferase</fullName>
        <ecNumber evidence="1">2.5.1.7</ecNumber>
    </recommendedName>
    <alternativeName>
        <fullName evidence="1">Enoylpyruvate transferase</fullName>
    </alternativeName>
    <alternativeName>
        <fullName evidence="1">UDP-N-acetylglucosamine enolpyruvyl transferase</fullName>
        <shortName evidence="1">EPT</shortName>
    </alternativeName>
</protein>
<organism>
    <name type="scientific">Cellvibrio japonicus (strain Ueda107)</name>
    <name type="common">Pseudomonas fluorescens subsp. cellulosa</name>
    <dbReference type="NCBI Taxonomy" id="498211"/>
    <lineage>
        <taxon>Bacteria</taxon>
        <taxon>Pseudomonadati</taxon>
        <taxon>Pseudomonadota</taxon>
        <taxon>Gammaproteobacteria</taxon>
        <taxon>Cellvibrionales</taxon>
        <taxon>Cellvibrionaceae</taxon>
        <taxon>Cellvibrio</taxon>
    </lineage>
</organism>
<gene>
    <name evidence="1" type="primary">murA</name>
    <name type="ordered locus">CJA_2796</name>
</gene>
<feature type="chain" id="PRO_1000094677" description="UDP-N-acetylglucosamine 1-carboxyvinyltransferase">
    <location>
        <begin position="1"/>
        <end position="420"/>
    </location>
</feature>
<feature type="active site" description="Proton donor" evidence="1">
    <location>
        <position position="117"/>
    </location>
</feature>
<feature type="binding site" evidence="1">
    <location>
        <begin position="22"/>
        <end position="23"/>
    </location>
    <ligand>
        <name>phosphoenolpyruvate</name>
        <dbReference type="ChEBI" id="CHEBI:58702"/>
    </ligand>
</feature>
<feature type="binding site" evidence="1">
    <location>
        <position position="93"/>
    </location>
    <ligand>
        <name>UDP-N-acetyl-alpha-D-glucosamine</name>
        <dbReference type="ChEBI" id="CHEBI:57705"/>
    </ligand>
</feature>
<feature type="binding site" evidence="1">
    <location>
        <position position="307"/>
    </location>
    <ligand>
        <name>UDP-N-acetyl-alpha-D-glucosamine</name>
        <dbReference type="ChEBI" id="CHEBI:57705"/>
    </ligand>
</feature>
<feature type="binding site" evidence="1">
    <location>
        <position position="329"/>
    </location>
    <ligand>
        <name>UDP-N-acetyl-alpha-D-glucosamine</name>
        <dbReference type="ChEBI" id="CHEBI:57705"/>
    </ligand>
</feature>
<feature type="modified residue" description="2-(S-cysteinyl)pyruvic acid O-phosphothioketal" evidence="1">
    <location>
        <position position="117"/>
    </location>
</feature>
<comment type="function">
    <text evidence="1">Cell wall formation. Adds enolpyruvyl to UDP-N-acetylglucosamine.</text>
</comment>
<comment type="catalytic activity">
    <reaction evidence="1">
        <text>phosphoenolpyruvate + UDP-N-acetyl-alpha-D-glucosamine = UDP-N-acetyl-3-O-(1-carboxyvinyl)-alpha-D-glucosamine + phosphate</text>
        <dbReference type="Rhea" id="RHEA:18681"/>
        <dbReference type="ChEBI" id="CHEBI:43474"/>
        <dbReference type="ChEBI" id="CHEBI:57705"/>
        <dbReference type="ChEBI" id="CHEBI:58702"/>
        <dbReference type="ChEBI" id="CHEBI:68483"/>
        <dbReference type="EC" id="2.5.1.7"/>
    </reaction>
</comment>
<comment type="pathway">
    <text evidence="1">Cell wall biogenesis; peptidoglycan biosynthesis.</text>
</comment>
<comment type="subcellular location">
    <subcellularLocation>
        <location evidence="1">Cytoplasm</location>
    </subcellularLocation>
</comment>
<comment type="similarity">
    <text evidence="1">Belongs to the EPSP synthase family. MurA subfamily.</text>
</comment>
<accession>B3PBY5</accession>
<reference key="1">
    <citation type="journal article" date="2008" name="J. Bacteriol.">
        <title>Insights into plant cell wall degradation from the genome sequence of the soil bacterium Cellvibrio japonicus.</title>
        <authorList>
            <person name="DeBoy R.T."/>
            <person name="Mongodin E.F."/>
            <person name="Fouts D.E."/>
            <person name="Tailford L.E."/>
            <person name="Khouri H."/>
            <person name="Emerson J.B."/>
            <person name="Mohamoud Y."/>
            <person name="Watkins K."/>
            <person name="Henrissat B."/>
            <person name="Gilbert H.J."/>
            <person name="Nelson K.E."/>
        </authorList>
    </citation>
    <scope>NUCLEOTIDE SEQUENCE [LARGE SCALE GENOMIC DNA]</scope>
    <source>
        <strain>Ueda107</strain>
    </source>
</reference>
<name>MURA_CELJU</name>
<proteinExistence type="inferred from homology"/>
<evidence type="ECO:0000255" key="1">
    <source>
        <dbReference type="HAMAP-Rule" id="MF_00111"/>
    </source>
</evidence>
<keyword id="KW-0131">Cell cycle</keyword>
<keyword id="KW-0132">Cell division</keyword>
<keyword id="KW-0133">Cell shape</keyword>
<keyword id="KW-0961">Cell wall biogenesis/degradation</keyword>
<keyword id="KW-0963">Cytoplasm</keyword>
<keyword id="KW-0573">Peptidoglycan synthesis</keyword>
<keyword id="KW-0670">Pyruvate</keyword>
<keyword id="KW-1185">Reference proteome</keyword>
<keyword id="KW-0808">Transferase</keyword>